<evidence type="ECO:0000250" key="1">
    <source>
        <dbReference type="UniProtKB" id="P53985"/>
    </source>
</evidence>
<evidence type="ECO:0000250" key="2">
    <source>
        <dbReference type="UniProtKB" id="P53986"/>
    </source>
</evidence>
<evidence type="ECO:0000250" key="3">
    <source>
        <dbReference type="UniProtKB" id="P53987"/>
    </source>
</evidence>
<evidence type="ECO:0000256" key="4">
    <source>
        <dbReference type="SAM" id="MobiDB-lite"/>
    </source>
</evidence>
<evidence type="ECO:0000305" key="5"/>
<comment type="function">
    <text evidence="1 2 3">Bidirectional proton-coupled monocarboxylate transporter. Catalyzes the rapid transport across the plasma membrane of many monocarboxylates such as lactate, pyruvate, acetate and the ketone bodies acetoacetate and beta-hydroxybutyrate, and thus contributes to the maintenance of intracellular pH (By similarity). The transport direction is determined by the proton motive force and the concentration gradient of the substrate monocarboxylate. MCT1 is a major lactate exporter (By similarity). Plays a role in cellular responses to a high-fat diet by modulating the cellular levels of lactate and pyruvate that contribute to the regulation of central metabolic pathways and insulin secretion, with concomitant effects on plasma insulin levels and blood glucose homeostasis (By similarity). Facilitates the protonated monocarboxylate form of succinate export, that its transient protonation upon muscle cell acidification in exercising muscle and ischemic heart. Functions via alternate outward- and inward-open conformation states. Protonation and deprotonation of 309-Asp is essential for the conformational transition (By similarity).</text>
</comment>
<comment type="catalytic activity">
    <reaction evidence="1">
        <text>(S)-lactate(in) + H(+)(in) = (S)-lactate(out) + H(+)(out)</text>
        <dbReference type="Rhea" id="RHEA:29415"/>
        <dbReference type="ChEBI" id="CHEBI:15378"/>
        <dbReference type="ChEBI" id="CHEBI:16651"/>
    </reaction>
    <physiologicalReaction direction="left-to-right" evidence="1">
        <dbReference type="Rhea" id="RHEA:29416"/>
    </physiologicalReaction>
    <physiologicalReaction direction="right-to-left" evidence="1">
        <dbReference type="Rhea" id="RHEA:29417"/>
    </physiologicalReaction>
</comment>
<comment type="catalytic activity">
    <reaction evidence="3">
        <text>acetate(out) + H(+)(out) = acetate(in) + H(+)(in)</text>
        <dbReference type="Rhea" id="RHEA:71803"/>
        <dbReference type="ChEBI" id="CHEBI:15378"/>
        <dbReference type="ChEBI" id="CHEBI:30089"/>
    </reaction>
    <physiologicalReaction direction="left-to-right" evidence="3">
        <dbReference type="Rhea" id="RHEA:71804"/>
    </physiologicalReaction>
    <physiologicalReaction direction="right-to-left" evidence="3">
        <dbReference type="Rhea" id="RHEA:71805"/>
    </physiologicalReaction>
</comment>
<comment type="catalytic activity">
    <reaction evidence="3">
        <text>acetoacetate(out) + H(+)(out) = acetoacetate(in) + H(+)(in)</text>
        <dbReference type="Rhea" id="RHEA:71775"/>
        <dbReference type="ChEBI" id="CHEBI:13705"/>
        <dbReference type="ChEBI" id="CHEBI:15378"/>
    </reaction>
    <physiologicalReaction direction="left-to-right" evidence="3">
        <dbReference type="Rhea" id="RHEA:71776"/>
    </physiologicalReaction>
    <physiologicalReaction direction="right-to-left" evidence="3">
        <dbReference type="Rhea" id="RHEA:71777"/>
    </physiologicalReaction>
</comment>
<comment type="catalytic activity">
    <reaction evidence="3">
        <text>pyruvate(out) + H(+)(out) = pyruvate(in) + H(+)(in)</text>
        <dbReference type="Rhea" id="RHEA:64720"/>
        <dbReference type="ChEBI" id="CHEBI:15361"/>
        <dbReference type="ChEBI" id="CHEBI:15378"/>
    </reaction>
</comment>
<comment type="catalytic activity">
    <reaction evidence="3">
        <text>(R)-3-hydroxybutanoate(out) + H(+)(out) = (R)-3-hydroxybutanoate(in) + H(+)(in)</text>
        <dbReference type="Rhea" id="RHEA:71795"/>
        <dbReference type="ChEBI" id="CHEBI:10983"/>
        <dbReference type="ChEBI" id="CHEBI:15378"/>
    </reaction>
    <physiologicalReaction direction="left-to-right" evidence="3">
        <dbReference type="Rhea" id="RHEA:71796"/>
    </physiologicalReaction>
    <physiologicalReaction direction="right-to-left" evidence="3">
        <dbReference type="Rhea" id="RHEA:71797"/>
    </physiologicalReaction>
</comment>
<comment type="catalytic activity">
    <reaction evidence="3">
        <text>3-methyl-2-oxobutanoate(out) + H(+)(out) = 3-methyl-2-oxobutanoate(in) + H(+)(in)</text>
        <dbReference type="Rhea" id="RHEA:71783"/>
        <dbReference type="ChEBI" id="CHEBI:11851"/>
        <dbReference type="ChEBI" id="CHEBI:15378"/>
    </reaction>
</comment>
<comment type="catalytic activity">
    <reaction evidence="3">
        <text>4-methyl-2-oxopentanoate(out) + H(+)(out) = 4-methyl-2-oxopentanoate(in) + H(+)(in)</text>
        <dbReference type="Rhea" id="RHEA:71779"/>
        <dbReference type="ChEBI" id="CHEBI:15378"/>
        <dbReference type="ChEBI" id="CHEBI:17865"/>
    </reaction>
</comment>
<comment type="catalytic activity">
    <reaction evidence="1">
        <text>succinate(in) + 2 H(+)(in) = succinate(out) + 2 H(+)(out)</text>
        <dbReference type="Rhea" id="RHEA:29303"/>
        <dbReference type="ChEBI" id="CHEBI:15378"/>
        <dbReference type="ChEBI" id="CHEBI:30031"/>
    </reaction>
    <physiologicalReaction direction="left-to-right" evidence="1">
        <dbReference type="Rhea" id="RHEA:29304"/>
    </physiologicalReaction>
</comment>
<comment type="subunit">
    <text evidence="1 3">Interacts with BSG; interaction mediates SLC16A1 targeting to the plasma membrane (By similarity). Interacts with EMB; interaction mediates SLC16A1 targeting to the plasma membrane (By similarity).</text>
</comment>
<comment type="subcellular location">
    <subcellularLocation>
        <location evidence="1">Cell membrane</location>
        <topology evidence="1">Multi-pass membrane protein</topology>
    </subcellularLocation>
    <subcellularLocation>
        <location evidence="3">Basolateral cell membrane</location>
        <topology evidence="1">Multi-pass membrane protein</topology>
    </subcellularLocation>
    <subcellularLocation>
        <location evidence="1">Apical cell membrane</location>
        <topology evidence="1">Multi-pass membrane protein</topology>
    </subcellularLocation>
    <text evidence="1">Expression at the cell surface requires the ancillary proteins BSG and EMB.</text>
</comment>
<comment type="similarity">
    <text evidence="5">Belongs to the major facilitator superfamily. Monocarboxylate porter (TC 2.A.1.13) family.</text>
</comment>
<dbReference type="EMBL" id="BC104598">
    <property type="protein sequence ID" value="AAI04599.2"/>
    <property type="molecule type" value="mRNA"/>
</dbReference>
<dbReference type="RefSeq" id="NP_001032396.1">
    <property type="nucleotide sequence ID" value="NM_001037319.1"/>
</dbReference>
<dbReference type="RefSeq" id="XP_015319143.1">
    <property type="nucleotide sequence ID" value="XM_015463657.1"/>
</dbReference>
<dbReference type="RefSeq" id="XP_024841919.1">
    <property type="nucleotide sequence ID" value="XM_024986151.2"/>
</dbReference>
<dbReference type="RefSeq" id="XP_059738537.1">
    <property type="nucleotide sequence ID" value="XM_059882554.1"/>
</dbReference>
<dbReference type="RefSeq" id="XP_059738538.1">
    <property type="nucleotide sequence ID" value="XM_059882555.1"/>
</dbReference>
<dbReference type="SMR" id="Q3MHW6"/>
<dbReference type="CORUM" id="Q3MHW6"/>
<dbReference type="FunCoup" id="Q3MHW6">
    <property type="interactions" value="724"/>
</dbReference>
<dbReference type="STRING" id="9913.ENSBTAP00000020102"/>
<dbReference type="PaxDb" id="9913-ENSBTAP00000020102"/>
<dbReference type="PeptideAtlas" id="Q3MHW6"/>
<dbReference type="Ensembl" id="ENSBTAT00000020102.3">
    <property type="protein sequence ID" value="ENSBTAP00000020102.2"/>
    <property type="gene ID" value="ENSBTAG00000015107.3"/>
</dbReference>
<dbReference type="GeneID" id="505775"/>
<dbReference type="KEGG" id="bta:505775"/>
<dbReference type="CTD" id="6566"/>
<dbReference type="VEuPathDB" id="HostDB:ENSBTAG00000015107"/>
<dbReference type="VGNC" id="VGNC:34683">
    <property type="gene designation" value="SLC16A1"/>
</dbReference>
<dbReference type="eggNOG" id="KOG2504">
    <property type="taxonomic scope" value="Eukaryota"/>
</dbReference>
<dbReference type="GeneTree" id="ENSGT00940000154955"/>
<dbReference type="HOGENOM" id="CLU_001265_59_1_1"/>
<dbReference type="InParanoid" id="Q3MHW6"/>
<dbReference type="OMA" id="EWAAFTE"/>
<dbReference type="OrthoDB" id="6499973at2759"/>
<dbReference type="TreeFam" id="TF313792"/>
<dbReference type="Reactome" id="R-BTA-210991">
    <property type="pathway name" value="Basigin interactions"/>
</dbReference>
<dbReference type="Reactome" id="R-BTA-433692">
    <property type="pathway name" value="Proton-coupled monocarboxylate transport"/>
</dbReference>
<dbReference type="Reactome" id="R-BTA-9749641">
    <property type="pathway name" value="Aspirin ADME"/>
</dbReference>
<dbReference type="Proteomes" id="UP000009136">
    <property type="component" value="Chromosome 3"/>
</dbReference>
<dbReference type="Bgee" id="ENSBTAG00000015107">
    <property type="expression patterns" value="Expressed in rumen epithelium and 107 other cell types or tissues"/>
</dbReference>
<dbReference type="GO" id="GO:0016324">
    <property type="term" value="C:apical plasma membrane"/>
    <property type="evidence" value="ECO:0000250"/>
    <property type="project" value="UniProtKB"/>
</dbReference>
<dbReference type="GO" id="GO:0016323">
    <property type="term" value="C:basolateral plasma membrane"/>
    <property type="evidence" value="ECO:0000318"/>
    <property type="project" value="GO_Central"/>
</dbReference>
<dbReference type="GO" id="GO:0005886">
    <property type="term" value="C:plasma membrane"/>
    <property type="evidence" value="ECO:0000250"/>
    <property type="project" value="UniProtKB"/>
</dbReference>
<dbReference type="GO" id="GO:0015650">
    <property type="term" value="F:lactate:proton symporter activity"/>
    <property type="evidence" value="ECO:0000250"/>
    <property type="project" value="UniProtKB"/>
</dbReference>
<dbReference type="GO" id="GO:0015295">
    <property type="term" value="F:solute:proton symporter activity"/>
    <property type="evidence" value="ECO:0000250"/>
    <property type="project" value="UniProtKB"/>
</dbReference>
<dbReference type="GO" id="GO:0015141">
    <property type="term" value="F:succinate transmembrane transporter activity"/>
    <property type="evidence" value="ECO:0000250"/>
    <property type="project" value="UniProtKB"/>
</dbReference>
<dbReference type="GO" id="GO:0035879">
    <property type="term" value="P:plasma membrane lactate transport"/>
    <property type="evidence" value="ECO:0000250"/>
    <property type="project" value="UniProtKB"/>
</dbReference>
<dbReference type="GO" id="GO:1901475">
    <property type="term" value="P:pyruvate transmembrane transport"/>
    <property type="evidence" value="ECO:0000250"/>
    <property type="project" value="UniProtKB"/>
</dbReference>
<dbReference type="GO" id="GO:0071422">
    <property type="term" value="P:succinate transmembrane transport"/>
    <property type="evidence" value="ECO:0000250"/>
    <property type="project" value="UniProtKB"/>
</dbReference>
<dbReference type="CDD" id="cd17426">
    <property type="entry name" value="MFS_MCT1"/>
    <property type="match status" value="1"/>
</dbReference>
<dbReference type="FunFam" id="1.20.1250.20:FF:000030">
    <property type="entry name" value="monocarboxylate transporter 1 isoform X1"/>
    <property type="match status" value="1"/>
</dbReference>
<dbReference type="Gene3D" id="1.20.1250.20">
    <property type="entry name" value="MFS general substrate transporter like domains"/>
    <property type="match status" value="1"/>
</dbReference>
<dbReference type="InterPro" id="IPR004743">
    <property type="entry name" value="MCT"/>
</dbReference>
<dbReference type="InterPro" id="IPR011701">
    <property type="entry name" value="MFS"/>
</dbReference>
<dbReference type="InterPro" id="IPR020846">
    <property type="entry name" value="MFS_dom"/>
</dbReference>
<dbReference type="InterPro" id="IPR036259">
    <property type="entry name" value="MFS_trans_sf"/>
</dbReference>
<dbReference type="InterPro" id="IPR050327">
    <property type="entry name" value="Proton-linked_MCT"/>
</dbReference>
<dbReference type="NCBIfam" id="TIGR00892">
    <property type="entry name" value="2A0113"/>
    <property type="match status" value="1"/>
</dbReference>
<dbReference type="PANTHER" id="PTHR11360">
    <property type="entry name" value="MONOCARBOXYLATE TRANSPORTER"/>
    <property type="match status" value="1"/>
</dbReference>
<dbReference type="PANTHER" id="PTHR11360:SF24">
    <property type="entry name" value="MONOCARBOXYLATE TRANSPORTER 1"/>
    <property type="match status" value="1"/>
</dbReference>
<dbReference type="Pfam" id="PF07690">
    <property type="entry name" value="MFS_1"/>
    <property type="match status" value="1"/>
</dbReference>
<dbReference type="SUPFAM" id="SSF103473">
    <property type="entry name" value="MFS general substrate transporter"/>
    <property type="match status" value="1"/>
</dbReference>
<dbReference type="PROSITE" id="PS50850">
    <property type="entry name" value="MFS"/>
    <property type="match status" value="1"/>
</dbReference>
<proteinExistence type="evidence at transcript level"/>
<keyword id="KW-1003">Cell membrane</keyword>
<keyword id="KW-0472">Membrane</keyword>
<keyword id="KW-0597">Phosphoprotein</keyword>
<keyword id="KW-1185">Reference proteome</keyword>
<keyword id="KW-0769">Symport</keyword>
<keyword id="KW-0812">Transmembrane</keyword>
<keyword id="KW-1133">Transmembrane helix</keyword>
<keyword id="KW-0813">Transport</keyword>
<organism>
    <name type="scientific">Bos taurus</name>
    <name type="common">Bovine</name>
    <dbReference type="NCBI Taxonomy" id="9913"/>
    <lineage>
        <taxon>Eukaryota</taxon>
        <taxon>Metazoa</taxon>
        <taxon>Chordata</taxon>
        <taxon>Craniata</taxon>
        <taxon>Vertebrata</taxon>
        <taxon>Euteleostomi</taxon>
        <taxon>Mammalia</taxon>
        <taxon>Eutheria</taxon>
        <taxon>Laurasiatheria</taxon>
        <taxon>Artiodactyla</taxon>
        <taxon>Ruminantia</taxon>
        <taxon>Pecora</taxon>
        <taxon>Bovidae</taxon>
        <taxon>Bovinae</taxon>
        <taxon>Bos</taxon>
    </lineage>
</organism>
<protein>
    <recommendedName>
        <fullName>Monocarboxylate transporter 1</fullName>
        <shortName>MCT 1</shortName>
    </recommendedName>
    <alternativeName>
        <fullName>Solute carrier family 16 member 1</fullName>
    </alternativeName>
</protein>
<sequence length="501" mass="54297">MPPAVGGPVGYTPPDGGWGWAVVIGAFISIGFSYAFPKSITVFFKEIEGIFNATTSEVSWISSIMLAVMYGGGPISSVLVNKYGSRPVMIVGGILSGSGLIAASFCNTVQELYFSVGVIGGLGLAFNLNPALTMIGKYFYKRRPLANGLAMAGSPVFLSTLAPLNQAFFMIYGWRGSFLILGGLLLNCCVAGALMRPIGPKPTTAEKEKSKGSLQEAGKYETKKGASDANTDLIGGNPKEEKKSIFQTLNTFLDLSLFKHRGFLLYLSGNVLMFFGLFTPLVFLSNYGKSKHYSSEKAAFLLSILAFVDMVARPSMGLVANTKWVRPRVQYFFAASIIANGLCHLAAPLSSTYIELCIYAGFFGFAFGWLSSVLFETLMDLVGPQRFSSAVGLVTIVECCPVLLGPPVLGRLNDIYGDYKYTYWACGIILIVAGIYLFIGMGINYRLLEKEQKAEKQQKKESKDEETNVDVAEKPKEVIDAAESPEHKATEEDPKEAESPV</sequence>
<name>MOT1_BOVIN</name>
<gene>
    <name type="primary">SLC16A1</name>
</gene>
<feature type="chain" id="PRO_0000287190" description="Monocarboxylate transporter 1">
    <location>
        <begin position="1"/>
        <end position="501"/>
    </location>
</feature>
<feature type="topological domain" description="Cytoplasmic" evidence="5">
    <location>
        <begin position="1"/>
        <end position="22"/>
    </location>
</feature>
<feature type="transmembrane region" description="Helical; Name=1" evidence="1">
    <location>
        <begin position="23"/>
        <end position="44"/>
    </location>
</feature>
<feature type="topological domain" description="Extracellular" evidence="5">
    <location>
        <begin position="45"/>
        <end position="55"/>
    </location>
</feature>
<feature type="transmembrane region" description="Helical; Name=2" evidence="1">
    <location>
        <begin position="56"/>
        <end position="80"/>
    </location>
</feature>
<feature type="topological domain" description="Cytoplasmic" evidence="5">
    <location>
        <begin position="81"/>
        <end position="84"/>
    </location>
</feature>
<feature type="transmembrane region" description="Helical; Name=3" evidence="1">
    <location>
        <begin position="85"/>
        <end position="105"/>
    </location>
</feature>
<feature type="topological domain" description="Extracellular" evidence="5">
    <location>
        <begin position="106"/>
        <end position="109"/>
    </location>
</feature>
<feature type="transmembrane region" description="Helical; Name=4" evidence="1">
    <location>
        <begin position="110"/>
        <end position="132"/>
    </location>
</feature>
<feature type="topological domain" description="Cytoplasmic" evidence="5">
    <location>
        <begin position="133"/>
        <end position="146"/>
    </location>
</feature>
<feature type="transmembrane region" description="Helical; Name=5" evidence="1">
    <location>
        <begin position="147"/>
        <end position="169"/>
    </location>
</feature>
<feature type="topological domain" description="Extracellular" evidence="5">
    <location>
        <begin position="170"/>
        <end position="174"/>
    </location>
</feature>
<feature type="transmembrane region" description="Helical; Name=6" evidence="1">
    <location>
        <begin position="175"/>
        <end position="194"/>
    </location>
</feature>
<feature type="topological domain" description="Cytoplasmic" evidence="5">
    <location>
        <begin position="195"/>
        <end position="261"/>
    </location>
</feature>
<feature type="transmembrane region" description="Helical; Name=7" evidence="1">
    <location>
        <begin position="262"/>
        <end position="288"/>
    </location>
</feature>
<feature type="topological domain" description="Extracellular" evidence="5">
    <location>
        <begin position="289"/>
        <end position="295"/>
    </location>
</feature>
<feature type="transmembrane region" description="Helical; Name=8" evidence="1">
    <location>
        <begin position="296"/>
        <end position="317"/>
    </location>
</feature>
<feature type="topological domain" description="Cytoplasmic" evidence="5">
    <location>
        <begin position="318"/>
        <end position="328"/>
    </location>
</feature>
<feature type="transmembrane region" description="Helical; Name=9" evidence="1">
    <location>
        <begin position="329"/>
        <end position="349"/>
    </location>
</feature>
<feature type="topological domain" description="Extracellular" evidence="5">
    <location>
        <begin position="350"/>
        <end position="353"/>
    </location>
</feature>
<feature type="transmembrane region" description="Helical; Name=10" evidence="1">
    <location>
        <begin position="354"/>
        <end position="375"/>
    </location>
</feature>
<feature type="topological domain" description="Cytoplasmic" evidence="5">
    <location>
        <begin position="376"/>
        <end position="389"/>
    </location>
</feature>
<feature type="transmembrane region" description="Helical; Name=11" evidence="1">
    <location>
        <begin position="390"/>
        <end position="410"/>
    </location>
</feature>
<feature type="topological domain" description="Extracellular" evidence="5">
    <location>
        <begin position="411"/>
        <end position="421"/>
    </location>
</feature>
<feature type="transmembrane region" description="Helical; Name=12" evidence="1">
    <location>
        <begin position="422"/>
        <end position="443"/>
    </location>
</feature>
<feature type="topological domain" description="Cytoplasmic" evidence="5">
    <location>
        <begin position="444"/>
        <end position="501"/>
    </location>
</feature>
<feature type="region of interest" description="Disordered" evidence="4">
    <location>
        <begin position="201"/>
        <end position="236"/>
    </location>
</feature>
<feature type="region of interest" description="Disordered" evidence="4">
    <location>
        <begin position="454"/>
        <end position="501"/>
    </location>
</feature>
<feature type="binding site" evidence="1">
    <location>
        <position position="38"/>
    </location>
    <ligand>
        <name>(S)-lactate</name>
        <dbReference type="ChEBI" id="CHEBI:16651"/>
    </ligand>
</feature>
<feature type="binding site" evidence="1">
    <location>
        <position position="309"/>
    </location>
    <ligand>
        <name>H(+)</name>
        <dbReference type="ChEBI" id="CHEBI:15378"/>
    </ligand>
</feature>
<feature type="binding site" evidence="1">
    <location>
        <position position="313"/>
    </location>
    <ligand>
        <name>(S)-lactate</name>
        <dbReference type="ChEBI" id="CHEBI:16651"/>
    </ligand>
</feature>
<feature type="modified residue" description="Phosphoserine" evidence="2">
    <location>
        <position position="210"/>
    </location>
</feature>
<feature type="modified residue" description="Phosphoserine" evidence="1">
    <location>
        <position position="213"/>
    </location>
</feature>
<feature type="modified residue" description="Phosphoserine" evidence="2">
    <location>
        <position position="227"/>
    </location>
</feature>
<feature type="modified residue" description="Phosphothreonine" evidence="2">
    <location>
        <position position="231"/>
    </location>
</feature>
<feature type="modified residue" description="Phosphoserine" evidence="1">
    <location>
        <position position="462"/>
    </location>
</feature>
<feature type="modified residue" description="Phosphothreonine" evidence="1">
    <location>
        <position position="467"/>
    </location>
</feature>
<feature type="modified residue" description="Phosphoserine" evidence="1">
    <location>
        <position position="484"/>
    </location>
</feature>
<feature type="modified residue" description="Phosphoserine" evidence="1">
    <location>
        <position position="499"/>
    </location>
</feature>
<reference key="1">
    <citation type="submission" date="2005-09" db="EMBL/GenBank/DDBJ databases">
        <authorList>
            <consortium name="NIH - Mammalian Gene Collection (MGC) project"/>
        </authorList>
    </citation>
    <scope>NUCLEOTIDE SEQUENCE [LARGE SCALE MRNA]</scope>
    <source>
        <strain>Hereford</strain>
        <tissue>Ascending colon</tissue>
    </source>
</reference>
<accession>Q3MHW6</accession>